<comment type="similarity">
    <text evidence="1">Belongs to the bacterial ribosomal protein bS16 family.</text>
</comment>
<organism>
    <name type="scientific">Xanthomonas campestris pv. campestris (strain ATCC 33913 / DSM 3586 / NCPPB 528 / LMG 568 / P 25)</name>
    <dbReference type="NCBI Taxonomy" id="190485"/>
    <lineage>
        <taxon>Bacteria</taxon>
        <taxon>Pseudomonadati</taxon>
        <taxon>Pseudomonadota</taxon>
        <taxon>Gammaproteobacteria</taxon>
        <taxon>Lysobacterales</taxon>
        <taxon>Lysobacteraceae</taxon>
        <taxon>Xanthomonas</taxon>
    </lineage>
</organism>
<dbReference type="EMBL" id="AE008922">
    <property type="protein sequence ID" value="AAM40497.1"/>
    <property type="molecule type" value="Genomic_DNA"/>
</dbReference>
<dbReference type="RefSeq" id="NP_636573.1">
    <property type="nucleotide sequence ID" value="NC_003902.1"/>
</dbReference>
<dbReference type="RefSeq" id="WP_011036396.1">
    <property type="nucleotide sequence ID" value="NC_003902.1"/>
</dbReference>
<dbReference type="SMR" id="Q8PBC3"/>
<dbReference type="STRING" id="190485.XCC1199"/>
<dbReference type="EnsemblBacteria" id="AAM40497">
    <property type="protein sequence ID" value="AAM40497"/>
    <property type="gene ID" value="XCC1199"/>
</dbReference>
<dbReference type="GeneID" id="79388647"/>
<dbReference type="KEGG" id="xcc:XCC1199"/>
<dbReference type="PATRIC" id="fig|190485.4.peg.1288"/>
<dbReference type="eggNOG" id="COG0228">
    <property type="taxonomic scope" value="Bacteria"/>
</dbReference>
<dbReference type="HOGENOM" id="CLU_100590_5_1_6"/>
<dbReference type="OrthoDB" id="9807878at2"/>
<dbReference type="Proteomes" id="UP000001010">
    <property type="component" value="Chromosome"/>
</dbReference>
<dbReference type="GO" id="GO:0005737">
    <property type="term" value="C:cytoplasm"/>
    <property type="evidence" value="ECO:0007669"/>
    <property type="project" value="UniProtKB-ARBA"/>
</dbReference>
<dbReference type="GO" id="GO:0015935">
    <property type="term" value="C:small ribosomal subunit"/>
    <property type="evidence" value="ECO:0000318"/>
    <property type="project" value="GO_Central"/>
</dbReference>
<dbReference type="GO" id="GO:0003735">
    <property type="term" value="F:structural constituent of ribosome"/>
    <property type="evidence" value="ECO:0000318"/>
    <property type="project" value="GO_Central"/>
</dbReference>
<dbReference type="GO" id="GO:0006412">
    <property type="term" value="P:translation"/>
    <property type="evidence" value="ECO:0007669"/>
    <property type="project" value="UniProtKB-UniRule"/>
</dbReference>
<dbReference type="FunFam" id="3.30.1320.10:FF:000008">
    <property type="entry name" value="30S ribosomal protein S16"/>
    <property type="match status" value="1"/>
</dbReference>
<dbReference type="Gene3D" id="3.30.1320.10">
    <property type="match status" value="1"/>
</dbReference>
<dbReference type="HAMAP" id="MF_00385">
    <property type="entry name" value="Ribosomal_bS16"/>
    <property type="match status" value="1"/>
</dbReference>
<dbReference type="InterPro" id="IPR000307">
    <property type="entry name" value="Ribosomal_bS16"/>
</dbReference>
<dbReference type="InterPro" id="IPR020592">
    <property type="entry name" value="Ribosomal_bS16_CS"/>
</dbReference>
<dbReference type="InterPro" id="IPR023803">
    <property type="entry name" value="Ribosomal_bS16_dom_sf"/>
</dbReference>
<dbReference type="NCBIfam" id="TIGR00002">
    <property type="entry name" value="S16"/>
    <property type="match status" value="1"/>
</dbReference>
<dbReference type="PANTHER" id="PTHR12919">
    <property type="entry name" value="30S RIBOSOMAL PROTEIN S16"/>
    <property type="match status" value="1"/>
</dbReference>
<dbReference type="PANTHER" id="PTHR12919:SF20">
    <property type="entry name" value="SMALL RIBOSOMAL SUBUNIT PROTEIN BS16M"/>
    <property type="match status" value="1"/>
</dbReference>
<dbReference type="Pfam" id="PF00886">
    <property type="entry name" value="Ribosomal_S16"/>
    <property type="match status" value="1"/>
</dbReference>
<dbReference type="SUPFAM" id="SSF54565">
    <property type="entry name" value="Ribosomal protein S16"/>
    <property type="match status" value="1"/>
</dbReference>
<dbReference type="PROSITE" id="PS00732">
    <property type="entry name" value="RIBOSOMAL_S16"/>
    <property type="match status" value="1"/>
</dbReference>
<accession>Q8PBC3</accession>
<reference key="1">
    <citation type="journal article" date="2002" name="Nature">
        <title>Comparison of the genomes of two Xanthomonas pathogens with differing host specificities.</title>
        <authorList>
            <person name="da Silva A.C.R."/>
            <person name="Ferro J.A."/>
            <person name="Reinach F.C."/>
            <person name="Farah C.S."/>
            <person name="Furlan L.R."/>
            <person name="Quaggio R.B."/>
            <person name="Monteiro-Vitorello C.B."/>
            <person name="Van Sluys M.A."/>
            <person name="Almeida N.F. Jr."/>
            <person name="Alves L.M.C."/>
            <person name="do Amaral A.M."/>
            <person name="Bertolini M.C."/>
            <person name="Camargo L.E.A."/>
            <person name="Camarotte G."/>
            <person name="Cannavan F."/>
            <person name="Cardozo J."/>
            <person name="Chambergo F."/>
            <person name="Ciapina L.P."/>
            <person name="Cicarelli R.M.B."/>
            <person name="Coutinho L.L."/>
            <person name="Cursino-Santos J.R."/>
            <person name="El-Dorry H."/>
            <person name="Faria J.B."/>
            <person name="Ferreira A.J.S."/>
            <person name="Ferreira R.C.C."/>
            <person name="Ferro M.I.T."/>
            <person name="Formighieri E.F."/>
            <person name="Franco M.C."/>
            <person name="Greggio C.C."/>
            <person name="Gruber A."/>
            <person name="Katsuyama A.M."/>
            <person name="Kishi L.T."/>
            <person name="Leite R.P."/>
            <person name="Lemos E.G.M."/>
            <person name="Lemos M.V.F."/>
            <person name="Locali E.C."/>
            <person name="Machado M.A."/>
            <person name="Madeira A.M.B.N."/>
            <person name="Martinez-Rossi N.M."/>
            <person name="Martins E.C."/>
            <person name="Meidanis J."/>
            <person name="Menck C.F.M."/>
            <person name="Miyaki C.Y."/>
            <person name="Moon D.H."/>
            <person name="Moreira L.M."/>
            <person name="Novo M.T.M."/>
            <person name="Okura V.K."/>
            <person name="Oliveira M.C."/>
            <person name="Oliveira V.R."/>
            <person name="Pereira H.A."/>
            <person name="Rossi A."/>
            <person name="Sena J.A.D."/>
            <person name="Silva C."/>
            <person name="de Souza R.F."/>
            <person name="Spinola L.A.F."/>
            <person name="Takita M.A."/>
            <person name="Tamura R.E."/>
            <person name="Teixeira E.C."/>
            <person name="Tezza R.I.D."/>
            <person name="Trindade dos Santos M."/>
            <person name="Truffi D."/>
            <person name="Tsai S.M."/>
            <person name="White F.F."/>
            <person name="Setubal J.C."/>
            <person name="Kitajima J.P."/>
        </authorList>
    </citation>
    <scope>NUCLEOTIDE SEQUENCE [LARGE SCALE GENOMIC DNA]</scope>
    <source>
        <strain>ATCC 33913 / DSM 3586 / NCPPB 528 / LMG 568 / P 25</strain>
    </source>
</reference>
<feature type="chain" id="PRO_0000167286" description="Small ribosomal subunit protein bS16">
    <location>
        <begin position="1"/>
        <end position="86"/>
    </location>
</feature>
<protein>
    <recommendedName>
        <fullName evidence="1">Small ribosomal subunit protein bS16</fullName>
    </recommendedName>
    <alternativeName>
        <fullName evidence="2">30S ribosomal protein S16</fullName>
    </alternativeName>
</protein>
<name>RS16_XANCP</name>
<keyword id="KW-1185">Reference proteome</keyword>
<keyword id="KW-0687">Ribonucleoprotein</keyword>
<keyword id="KW-0689">Ribosomal protein</keyword>
<sequence>MVKIRLTRGGAKKRPFYHIIVTDVRSARDGRNIERLGYYNPVAQGAEPRVVLDVARVDHWVGQGAQLTDKVRNLYREASKSQAAAA</sequence>
<gene>
    <name evidence="1" type="primary">rpsP</name>
    <name type="ordered locus">XCC1199</name>
</gene>
<proteinExistence type="inferred from homology"/>
<evidence type="ECO:0000255" key="1">
    <source>
        <dbReference type="HAMAP-Rule" id="MF_00385"/>
    </source>
</evidence>
<evidence type="ECO:0000305" key="2"/>